<sequence>MSLLTDTITRIGSLDSAAATAAQARQDVLTKPQGALGRLETLSVQIAGITGQTRPRLNNPAVIVMAADHGVARRGVSAYPSEVTSQMVLNFLNGGAAINVLARHIGARVIVVDIGVAANLPSHSELIDRKLGMGTADFSVEPAMSRAQAQQAVEIGIACAYDAIASGVDLLATGDMGIGNTTASSAVVAAITGRPVAEVTGRGAGIDDAGLARKIAVIEQALALHHPDPRDALDVLTKVGGFEIGGLAGVILGAAARRVPVVIDGFISGAAALIACTLAPSAQPFLIAALRSVERGHDAVFAHLDLTPLFDLGMRLGEGTGAVLGMSLCQAACKILDEMATFGEAGVSGKVEG</sequence>
<protein>
    <recommendedName>
        <fullName evidence="1">Nicotinate-nucleotide--dimethylbenzimidazole phosphoribosyltransferase</fullName>
        <shortName evidence="1">NN:DBI PRT</shortName>
        <ecNumber evidence="1">2.4.2.21</ecNumber>
    </recommendedName>
    <alternativeName>
        <fullName evidence="1">N(1)-alpha-phosphoribosyltransferase</fullName>
    </alternativeName>
</protein>
<comment type="function">
    <text evidence="1">Catalyzes the synthesis of alpha-ribazole-5'-phosphate from nicotinate mononucleotide (NAMN) and 5,6-dimethylbenzimidazole (DMB).</text>
</comment>
<comment type="catalytic activity">
    <reaction evidence="1">
        <text>5,6-dimethylbenzimidazole + nicotinate beta-D-ribonucleotide = alpha-ribazole 5'-phosphate + nicotinate + H(+)</text>
        <dbReference type="Rhea" id="RHEA:11196"/>
        <dbReference type="ChEBI" id="CHEBI:15378"/>
        <dbReference type="ChEBI" id="CHEBI:15890"/>
        <dbReference type="ChEBI" id="CHEBI:32544"/>
        <dbReference type="ChEBI" id="CHEBI:57502"/>
        <dbReference type="ChEBI" id="CHEBI:57918"/>
        <dbReference type="EC" id="2.4.2.21"/>
    </reaction>
</comment>
<comment type="pathway">
    <text evidence="1">Nucleoside biosynthesis; alpha-ribazole biosynthesis; alpha-ribazole from 5,6-dimethylbenzimidazole: step 1/2.</text>
</comment>
<comment type="similarity">
    <text evidence="1">Belongs to the CobT family.</text>
</comment>
<accession>A7NH25</accession>
<reference key="1">
    <citation type="submission" date="2007-08" db="EMBL/GenBank/DDBJ databases">
        <title>Complete sequence of Roseiflexus castenholzii DSM 13941.</title>
        <authorList>
            <consortium name="US DOE Joint Genome Institute"/>
            <person name="Copeland A."/>
            <person name="Lucas S."/>
            <person name="Lapidus A."/>
            <person name="Barry K."/>
            <person name="Glavina del Rio T."/>
            <person name="Dalin E."/>
            <person name="Tice H."/>
            <person name="Pitluck S."/>
            <person name="Thompson L.S."/>
            <person name="Brettin T."/>
            <person name="Bruce D."/>
            <person name="Detter J.C."/>
            <person name="Han C."/>
            <person name="Tapia R."/>
            <person name="Schmutz J."/>
            <person name="Larimer F."/>
            <person name="Land M."/>
            <person name="Hauser L."/>
            <person name="Kyrpides N."/>
            <person name="Mikhailova N."/>
            <person name="Bryant D.A."/>
            <person name="Hanada S."/>
            <person name="Tsukatani Y."/>
            <person name="Richardson P."/>
        </authorList>
    </citation>
    <scope>NUCLEOTIDE SEQUENCE [LARGE SCALE GENOMIC DNA]</scope>
    <source>
        <strain>DSM 13941 / HLO8</strain>
    </source>
</reference>
<feature type="chain" id="PRO_1000078246" description="Nicotinate-nucleotide--dimethylbenzimidazole phosphoribosyltransferase">
    <location>
        <begin position="1"/>
        <end position="353"/>
    </location>
</feature>
<feature type="active site" description="Proton acceptor" evidence="1">
    <location>
        <position position="318"/>
    </location>
</feature>
<name>COBT_ROSCS</name>
<keyword id="KW-0169">Cobalamin biosynthesis</keyword>
<keyword id="KW-0328">Glycosyltransferase</keyword>
<keyword id="KW-1185">Reference proteome</keyword>
<keyword id="KW-0808">Transferase</keyword>
<organism>
    <name type="scientific">Roseiflexus castenholzii (strain DSM 13941 / HLO8)</name>
    <dbReference type="NCBI Taxonomy" id="383372"/>
    <lineage>
        <taxon>Bacteria</taxon>
        <taxon>Bacillati</taxon>
        <taxon>Chloroflexota</taxon>
        <taxon>Chloroflexia</taxon>
        <taxon>Chloroflexales</taxon>
        <taxon>Roseiflexineae</taxon>
        <taxon>Roseiflexaceae</taxon>
        <taxon>Roseiflexus</taxon>
    </lineage>
</organism>
<gene>
    <name evidence="1" type="primary">cobT</name>
    <name type="ordered locus">Rcas_0647</name>
</gene>
<proteinExistence type="inferred from homology"/>
<dbReference type="EC" id="2.4.2.21" evidence="1"/>
<dbReference type="EMBL" id="CP000804">
    <property type="protein sequence ID" value="ABU56772.1"/>
    <property type="molecule type" value="Genomic_DNA"/>
</dbReference>
<dbReference type="RefSeq" id="WP_012119203.1">
    <property type="nucleotide sequence ID" value="NC_009767.1"/>
</dbReference>
<dbReference type="SMR" id="A7NH25"/>
<dbReference type="STRING" id="383372.Rcas_0647"/>
<dbReference type="KEGG" id="rca:Rcas_0647"/>
<dbReference type="eggNOG" id="COG2038">
    <property type="taxonomic scope" value="Bacteria"/>
</dbReference>
<dbReference type="HOGENOM" id="CLU_002982_0_0_0"/>
<dbReference type="OrthoDB" id="9781491at2"/>
<dbReference type="UniPathway" id="UPA00061">
    <property type="reaction ID" value="UER00516"/>
</dbReference>
<dbReference type="Proteomes" id="UP000000263">
    <property type="component" value="Chromosome"/>
</dbReference>
<dbReference type="GO" id="GO:0008939">
    <property type="term" value="F:nicotinate-nucleotide-dimethylbenzimidazole phosphoribosyltransferase activity"/>
    <property type="evidence" value="ECO:0007669"/>
    <property type="project" value="UniProtKB-UniRule"/>
</dbReference>
<dbReference type="GO" id="GO:0009236">
    <property type="term" value="P:cobalamin biosynthetic process"/>
    <property type="evidence" value="ECO:0007669"/>
    <property type="project" value="UniProtKB-KW"/>
</dbReference>
<dbReference type="CDD" id="cd02439">
    <property type="entry name" value="DMB-PRT_CobT"/>
    <property type="match status" value="1"/>
</dbReference>
<dbReference type="FunFam" id="3.40.50.10210:FF:000001">
    <property type="entry name" value="Nicotinate-nucleotide--dimethylbenzimidazole phosphoribosyltransferase"/>
    <property type="match status" value="1"/>
</dbReference>
<dbReference type="Gene3D" id="1.10.1610.10">
    <property type="match status" value="1"/>
</dbReference>
<dbReference type="Gene3D" id="3.40.50.10210">
    <property type="match status" value="1"/>
</dbReference>
<dbReference type="HAMAP" id="MF_00230">
    <property type="entry name" value="CobT"/>
    <property type="match status" value="1"/>
</dbReference>
<dbReference type="InterPro" id="IPR003200">
    <property type="entry name" value="Nict_dMeBzImd_PRibTrfase"/>
</dbReference>
<dbReference type="InterPro" id="IPR017846">
    <property type="entry name" value="Nict_dMeBzImd_PRibTrfase_bact"/>
</dbReference>
<dbReference type="InterPro" id="IPR023195">
    <property type="entry name" value="Nict_dMeBzImd_PRibTrfase_N"/>
</dbReference>
<dbReference type="InterPro" id="IPR036087">
    <property type="entry name" value="Nict_dMeBzImd_PRibTrfase_sf"/>
</dbReference>
<dbReference type="NCBIfam" id="TIGR03160">
    <property type="entry name" value="cobT_DBIPRT"/>
    <property type="match status" value="1"/>
</dbReference>
<dbReference type="NCBIfam" id="NF000996">
    <property type="entry name" value="PRK00105.1"/>
    <property type="match status" value="1"/>
</dbReference>
<dbReference type="PANTHER" id="PTHR43463">
    <property type="entry name" value="NICOTINATE-NUCLEOTIDE--DIMETHYLBENZIMIDAZOLE PHOSPHORIBOSYLTRANSFERASE"/>
    <property type="match status" value="1"/>
</dbReference>
<dbReference type="PANTHER" id="PTHR43463:SF1">
    <property type="entry name" value="NICOTINATE-NUCLEOTIDE--DIMETHYLBENZIMIDAZOLE PHOSPHORIBOSYLTRANSFERASE"/>
    <property type="match status" value="1"/>
</dbReference>
<dbReference type="Pfam" id="PF02277">
    <property type="entry name" value="DBI_PRT"/>
    <property type="match status" value="1"/>
</dbReference>
<dbReference type="SUPFAM" id="SSF52733">
    <property type="entry name" value="Nicotinate mononucleotide:5,6-dimethylbenzimidazole phosphoribosyltransferase (CobT)"/>
    <property type="match status" value="1"/>
</dbReference>
<evidence type="ECO:0000255" key="1">
    <source>
        <dbReference type="HAMAP-Rule" id="MF_00230"/>
    </source>
</evidence>